<organism>
    <name type="scientific">Xanthomonas oryzae pv. oryzae (strain MAFF 311018)</name>
    <dbReference type="NCBI Taxonomy" id="342109"/>
    <lineage>
        <taxon>Bacteria</taxon>
        <taxon>Pseudomonadati</taxon>
        <taxon>Pseudomonadota</taxon>
        <taxon>Gammaproteobacteria</taxon>
        <taxon>Lysobacterales</taxon>
        <taxon>Lysobacteraceae</taxon>
        <taxon>Xanthomonas</taxon>
    </lineage>
</organism>
<gene>
    <name evidence="1" type="primary">rpoZ</name>
    <name type="ordered locus">XOO1045</name>
</gene>
<keyword id="KW-0240">DNA-directed RNA polymerase</keyword>
<keyword id="KW-0548">Nucleotidyltransferase</keyword>
<keyword id="KW-0804">Transcription</keyword>
<keyword id="KW-0808">Transferase</keyword>
<dbReference type="EC" id="2.7.7.6" evidence="1"/>
<dbReference type="EMBL" id="AP008229">
    <property type="protein sequence ID" value="BAE67800.1"/>
    <property type="molecule type" value="Genomic_DNA"/>
</dbReference>
<dbReference type="RefSeq" id="WP_011407791.1">
    <property type="nucleotide sequence ID" value="NC_007705.1"/>
</dbReference>
<dbReference type="SMR" id="Q2P6M7"/>
<dbReference type="KEGG" id="xom:XOO1045"/>
<dbReference type="HOGENOM" id="CLU_125406_5_3_6"/>
<dbReference type="GO" id="GO:0000428">
    <property type="term" value="C:DNA-directed RNA polymerase complex"/>
    <property type="evidence" value="ECO:0007669"/>
    <property type="project" value="UniProtKB-KW"/>
</dbReference>
<dbReference type="GO" id="GO:0003677">
    <property type="term" value="F:DNA binding"/>
    <property type="evidence" value="ECO:0007669"/>
    <property type="project" value="UniProtKB-UniRule"/>
</dbReference>
<dbReference type="GO" id="GO:0003899">
    <property type="term" value="F:DNA-directed RNA polymerase activity"/>
    <property type="evidence" value="ECO:0007669"/>
    <property type="project" value="UniProtKB-UniRule"/>
</dbReference>
<dbReference type="GO" id="GO:0006351">
    <property type="term" value="P:DNA-templated transcription"/>
    <property type="evidence" value="ECO:0007669"/>
    <property type="project" value="UniProtKB-UniRule"/>
</dbReference>
<dbReference type="Gene3D" id="3.90.940.10">
    <property type="match status" value="1"/>
</dbReference>
<dbReference type="HAMAP" id="MF_00366">
    <property type="entry name" value="RNApol_bact_RpoZ"/>
    <property type="match status" value="1"/>
</dbReference>
<dbReference type="InterPro" id="IPR003716">
    <property type="entry name" value="DNA-dir_RNA_pol_omega"/>
</dbReference>
<dbReference type="InterPro" id="IPR006110">
    <property type="entry name" value="Pol_omega/Rpo6/RPB6"/>
</dbReference>
<dbReference type="InterPro" id="IPR036161">
    <property type="entry name" value="RPB6/omega-like_sf"/>
</dbReference>
<dbReference type="NCBIfam" id="TIGR00690">
    <property type="entry name" value="rpoZ"/>
    <property type="match status" value="1"/>
</dbReference>
<dbReference type="PANTHER" id="PTHR34476">
    <property type="entry name" value="DNA-DIRECTED RNA POLYMERASE SUBUNIT OMEGA"/>
    <property type="match status" value="1"/>
</dbReference>
<dbReference type="PANTHER" id="PTHR34476:SF1">
    <property type="entry name" value="DNA-DIRECTED RNA POLYMERASE SUBUNIT OMEGA"/>
    <property type="match status" value="1"/>
</dbReference>
<dbReference type="Pfam" id="PF01192">
    <property type="entry name" value="RNA_pol_Rpb6"/>
    <property type="match status" value="1"/>
</dbReference>
<dbReference type="SMART" id="SM01409">
    <property type="entry name" value="RNA_pol_Rpb6"/>
    <property type="match status" value="1"/>
</dbReference>
<dbReference type="SUPFAM" id="SSF63562">
    <property type="entry name" value="RPB6/omega subunit-like"/>
    <property type="match status" value="1"/>
</dbReference>
<accession>Q2P6M7</accession>
<reference key="1">
    <citation type="journal article" date="2005" name="Jpn. Agric. Res. Q.">
        <title>Genome sequence of Xanthomonas oryzae pv. oryzae suggests contribution of large numbers of effector genes and insertion sequences to its race diversity.</title>
        <authorList>
            <person name="Ochiai H."/>
            <person name="Inoue Y."/>
            <person name="Takeya M."/>
            <person name="Sasaki A."/>
            <person name="Kaku H."/>
        </authorList>
    </citation>
    <scope>NUCLEOTIDE SEQUENCE [LARGE SCALE GENOMIC DNA]</scope>
    <source>
        <strain>MAFF 311018</strain>
    </source>
</reference>
<evidence type="ECO:0000255" key="1">
    <source>
        <dbReference type="HAMAP-Rule" id="MF_00366"/>
    </source>
</evidence>
<sequence length="99" mass="11099">MARITVEDCLEVVNNRFELVMMASKRARQLANGVQPLIENAAASDKPTVMALREIAARRIDNALIDEVEKAERERAEREALEWAAAEVVADEDMSKNDD</sequence>
<protein>
    <recommendedName>
        <fullName evidence="1">DNA-directed RNA polymerase subunit omega</fullName>
        <shortName evidence="1">RNAP omega subunit</shortName>
        <ecNumber evidence="1">2.7.7.6</ecNumber>
    </recommendedName>
    <alternativeName>
        <fullName evidence="1">RNA polymerase omega subunit</fullName>
    </alternativeName>
    <alternativeName>
        <fullName evidence="1">Transcriptase subunit omega</fullName>
    </alternativeName>
</protein>
<feature type="chain" id="PRO_0000237533" description="DNA-directed RNA polymerase subunit omega">
    <location>
        <begin position="1"/>
        <end position="99"/>
    </location>
</feature>
<comment type="function">
    <text evidence="1">Promotes RNA polymerase assembly. Latches the N- and C-terminal regions of the beta' subunit thereby facilitating its interaction with the beta and alpha subunits.</text>
</comment>
<comment type="catalytic activity">
    <reaction evidence="1">
        <text>RNA(n) + a ribonucleoside 5'-triphosphate = RNA(n+1) + diphosphate</text>
        <dbReference type="Rhea" id="RHEA:21248"/>
        <dbReference type="Rhea" id="RHEA-COMP:14527"/>
        <dbReference type="Rhea" id="RHEA-COMP:17342"/>
        <dbReference type="ChEBI" id="CHEBI:33019"/>
        <dbReference type="ChEBI" id="CHEBI:61557"/>
        <dbReference type="ChEBI" id="CHEBI:140395"/>
        <dbReference type="EC" id="2.7.7.6"/>
    </reaction>
</comment>
<comment type="subunit">
    <text evidence="1">The RNAP catalytic core consists of 2 alpha, 1 beta, 1 beta' and 1 omega subunit. When a sigma factor is associated with the core the holoenzyme is formed, which can initiate transcription.</text>
</comment>
<comment type="similarity">
    <text evidence="1">Belongs to the RNA polymerase subunit omega family.</text>
</comment>
<name>RPOZ_XANOM</name>
<proteinExistence type="inferred from homology"/>